<proteinExistence type="inferred from homology"/>
<reference key="1">
    <citation type="journal article" date="2009" name="J. Bacteriol.">
        <title>Complete genome sequence and comparative genome analysis of enteropathogenic Escherichia coli O127:H6 strain E2348/69.</title>
        <authorList>
            <person name="Iguchi A."/>
            <person name="Thomson N.R."/>
            <person name="Ogura Y."/>
            <person name="Saunders D."/>
            <person name="Ooka T."/>
            <person name="Henderson I.R."/>
            <person name="Harris D."/>
            <person name="Asadulghani M."/>
            <person name="Kurokawa K."/>
            <person name="Dean P."/>
            <person name="Kenny B."/>
            <person name="Quail M.A."/>
            <person name="Thurston S."/>
            <person name="Dougan G."/>
            <person name="Hayashi T."/>
            <person name="Parkhill J."/>
            <person name="Frankel G."/>
        </authorList>
    </citation>
    <scope>NUCLEOTIDE SEQUENCE [LARGE SCALE GENOMIC DNA]</scope>
    <source>
        <strain>E2348/69 / EPEC</strain>
    </source>
</reference>
<comment type="function">
    <text evidence="1">Bifunctional serine/threonine kinase and phosphorylase involved in the regulation of the phosphoenolpyruvate synthase (PEPS) by catalyzing its phosphorylation/dephosphorylation.</text>
</comment>
<comment type="catalytic activity">
    <reaction evidence="1">
        <text>[pyruvate, water dikinase] + ADP = [pyruvate, water dikinase]-phosphate + AMP + H(+)</text>
        <dbReference type="Rhea" id="RHEA:46020"/>
        <dbReference type="Rhea" id="RHEA-COMP:11425"/>
        <dbReference type="Rhea" id="RHEA-COMP:11426"/>
        <dbReference type="ChEBI" id="CHEBI:15378"/>
        <dbReference type="ChEBI" id="CHEBI:43176"/>
        <dbReference type="ChEBI" id="CHEBI:68546"/>
        <dbReference type="ChEBI" id="CHEBI:456215"/>
        <dbReference type="ChEBI" id="CHEBI:456216"/>
        <dbReference type="EC" id="2.7.11.33"/>
    </reaction>
</comment>
<comment type="catalytic activity">
    <reaction evidence="1">
        <text>[pyruvate, water dikinase]-phosphate + phosphate + H(+) = [pyruvate, water dikinase] + diphosphate</text>
        <dbReference type="Rhea" id="RHEA:48580"/>
        <dbReference type="Rhea" id="RHEA-COMP:11425"/>
        <dbReference type="Rhea" id="RHEA-COMP:11426"/>
        <dbReference type="ChEBI" id="CHEBI:15378"/>
        <dbReference type="ChEBI" id="CHEBI:33019"/>
        <dbReference type="ChEBI" id="CHEBI:43176"/>
        <dbReference type="ChEBI" id="CHEBI:43474"/>
        <dbReference type="ChEBI" id="CHEBI:68546"/>
        <dbReference type="EC" id="2.7.4.28"/>
    </reaction>
</comment>
<comment type="similarity">
    <text evidence="1">Belongs to the pyruvate, phosphate/water dikinase regulatory protein family. PSRP subfamily.</text>
</comment>
<dbReference type="EC" id="2.7.11.33" evidence="1"/>
<dbReference type="EC" id="2.7.4.28" evidence="1"/>
<dbReference type="EMBL" id="FM180568">
    <property type="protein sequence ID" value="CAS09336.1"/>
    <property type="molecule type" value="Genomic_DNA"/>
</dbReference>
<dbReference type="RefSeq" id="WP_000368046.1">
    <property type="nucleotide sequence ID" value="NC_011601.1"/>
</dbReference>
<dbReference type="SMR" id="B7US42"/>
<dbReference type="GeneID" id="93775866"/>
<dbReference type="KEGG" id="ecg:E2348C_1788"/>
<dbReference type="HOGENOM" id="CLU_046206_1_0_6"/>
<dbReference type="Proteomes" id="UP000008205">
    <property type="component" value="Chromosome"/>
</dbReference>
<dbReference type="GO" id="GO:0043531">
    <property type="term" value="F:ADP binding"/>
    <property type="evidence" value="ECO:0007669"/>
    <property type="project" value="UniProtKB-UniRule"/>
</dbReference>
<dbReference type="GO" id="GO:0005524">
    <property type="term" value="F:ATP binding"/>
    <property type="evidence" value="ECO:0007669"/>
    <property type="project" value="InterPro"/>
</dbReference>
<dbReference type="GO" id="GO:0016776">
    <property type="term" value="F:phosphotransferase activity, phosphate group as acceptor"/>
    <property type="evidence" value="ECO:0007669"/>
    <property type="project" value="UniProtKB-UniRule"/>
</dbReference>
<dbReference type="GO" id="GO:0004674">
    <property type="term" value="F:protein serine/threonine kinase activity"/>
    <property type="evidence" value="ECO:0007669"/>
    <property type="project" value="UniProtKB-UniRule"/>
</dbReference>
<dbReference type="HAMAP" id="MF_01062">
    <property type="entry name" value="PSRP"/>
    <property type="match status" value="1"/>
</dbReference>
<dbReference type="InterPro" id="IPR005177">
    <property type="entry name" value="Kinase-pyrophosphorylase"/>
</dbReference>
<dbReference type="InterPro" id="IPR026530">
    <property type="entry name" value="PSRP"/>
</dbReference>
<dbReference type="NCBIfam" id="NF003742">
    <property type="entry name" value="PRK05339.1"/>
    <property type="match status" value="1"/>
</dbReference>
<dbReference type="PANTHER" id="PTHR31756">
    <property type="entry name" value="PYRUVATE, PHOSPHATE DIKINASE REGULATORY PROTEIN 1, CHLOROPLASTIC"/>
    <property type="match status" value="1"/>
</dbReference>
<dbReference type="PANTHER" id="PTHR31756:SF3">
    <property type="entry name" value="PYRUVATE, PHOSPHATE DIKINASE REGULATORY PROTEIN 1, CHLOROPLASTIC"/>
    <property type="match status" value="1"/>
</dbReference>
<dbReference type="Pfam" id="PF03618">
    <property type="entry name" value="Kinase-PPPase"/>
    <property type="match status" value="1"/>
</dbReference>
<evidence type="ECO:0000255" key="1">
    <source>
        <dbReference type="HAMAP-Rule" id="MF_01062"/>
    </source>
</evidence>
<name>PSRP_ECO27</name>
<keyword id="KW-0418">Kinase</keyword>
<keyword id="KW-0547">Nucleotide-binding</keyword>
<keyword id="KW-1185">Reference proteome</keyword>
<keyword id="KW-0723">Serine/threonine-protein kinase</keyword>
<keyword id="KW-0808">Transferase</keyword>
<accession>B7US42</accession>
<feature type="chain" id="PRO_1000149707" description="Phosphoenolpyruvate synthase regulatory protein">
    <location>
        <begin position="1"/>
        <end position="277"/>
    </location>
</feature>
<feature type="binding site" evidence="1">
    <location>
        <begin position="157"/>
        <end position="164"/>
    </location>
    <ligand>
        <name>ADP</name>
        <dbReference type="ChEBI" id="CHEBI:456216"/>
    </ligand>
</feature>
<sequence length="277" mass="31211">MDNAVDRHVFYISDGTAITAEVLGHAVMSQFPVTISSITLPFVENESRARAVKDQIDAIYHQTGVRPLVFYSIVLPEIRAIILQSEGFCQDIVQALVAPLQQEMKLDPTPIAHRTHGLNPNNLNKYDARIAAIDYTLAHDDGISLRNLDQAQVILLGVSRCGKTPTSLYLAMQFGIRAANYPFIADDMDNLVLPASLKPLQHKLFGLTIDPERLAAIREERRENSRYASLRQCRMEVAEVEALYRKNQIPWINSTNYSVEEIATKILDIMGLSRRMY</sequence>
<protein>
    <recommendedName>
        <fullName evidence="1">Phosphoenolpyruvate synthase regulatory protein</fullName>
        <shortName evidence="1">PEP synthase regulatory protein</shortName>
        <shortName evidence="1">PSRP</shortName>
        <ecNumber evidence="1">2.7.11.33</ecNumber>
        <ecNumber evidence="1">2.7.4.28</ecNumber>
    </recommendedName>
    <alternativeName>
        <fullName evidence="1">Pyruvate, water dikinase regulatory protein</fullName>
    </alternativeName>
</protein>
<organism>
    <name type="scientific">Escherichia coli O127:H6 (strain E2348/69 / EPEC)</name>
    <dbReference type="NCBI Taxonomy" id="574521"/>
    <lineage>
        <taxon>Bacteria</taxon>
        <taxon>Pseudomonadati</taxon>
        <taxon>Pseudomonadota</taxon>
        <taxon>Gammaproteobacteria</taxon>
        <taxon>Enterobacterales</taxon>
        <taxon>Enterobacteriaceae</taxon>
        <taxon>Escherichia</taxon>
    </lineage>
</organism>
<gene>
    <name evidence="1" type="primary">ppsR</name>
    <name type="ordered locus">E2348C_1788</name>
</gene>